<dbReference type="EC" id="3.6.4.12" evidence="1"/>
<dbReference type="EC" id="1.14.11.6" evidence="1"/>
<dbReference type="EMBL" id="FR796410">
    <property type="protein sequence ID" value="CAJ02566.1"/>
    <property type="molecule type" value="Genomic_DNA"/>
</dbReference>
<dbReference type="RefSeq" id="XP_001687603.1">
    <property type="nucleotide sequence ID" value="XM_001687551.1"/>
</dbReference>
<dbReference type="SMR" id="Q4QFY1"/>
<dbReference type="STRING" id="5664.Q4QFY1"/>
<dbReference type="EnsemblProtists" id="CAJ02566">
    <property type="protein sequence ID" value="CAJ02566"/>
    <property type="gene ID" value="LMJF_14_0040"/>
</dbReference>
<dbReference type="GeneID" id="5650208"/>
<dbReference type="KEGG" id="lma:LMJF_14_0040"/>
<dbReference type="VEuPathDB" id="TriTrypDB:LmjF.14.0040"/>
<dbReference type="VEuPathDB" id="TriTrypDB:LMJFC_140005500"/>
<dbReference type="VEuPathDB" id="TriTrypDB:LMJLV39_140005400"/>
<dbReference type="VEuPathDB" id="TriTrypDB:LMJSD75_140005400"/>
<dbReference type="eggNOG" id="KOG0387">
    <property type="taxonomic scope" value="Eukaryota"/>
</dbReference>
<dbReference type="InParanoid" id="Q4QFY1"/>
<dbReference type="BRENDA" id="1.14.11.6">
    <property type="organism ID" value="2950"/>
</dbReference>
<dbReference type="Proteomes" id="UP000000542">
    <property type="component" value="Chromosome 14"/>
</dbReference>
<dbReference type="GO" id="GO:0005634">
    <property type="term" value="C:nucleus"/>
    <property type="evidence" value="ECO:0000266"/>
    <property type="project" value="GeneDB"/>
</dbReference>
<dbReference type="GO" id="GO:0005524">
    <property type="term" value="F:ATP binding"/>
    <property type="evidence" value="ECO:0007669"/>
    <property type="project" value="UniProtKB-KW"/>
</dbReference>
<dbReference type="GO" id="GO:0016887">
    <property type="term" value="F:ATP hydrolysis activity"/>
    <property type="evidence" value="ECO:0007669"/>
    <property type="project" value="RHEA"/>
</dbReference>
<dbReference type="GO" id="GO:0003677">
    <property type="term" value="F:DNA binding"/>
    <property type="evidence" value="ECO:0007669"/>
    <property type="project" value="UniProtKB-KW"/>
</dbReference>
<dbReference type="GO" id="GO:0015616">
    <property type="term" value="F:DNA translocase activity"/>
    <property type="evidence" value="ECO:0000318"/>
    <property type="project" value="GO_Central"/>
</dbReference>
<dbReference type="GO" id="GO:0008198">
    <property type="term" value="F:ferrous iron binding"/>
    <property type="evidence" value="ECO:0000266"/>
    <property type="project" value="GeneDB"/>
</dbReference>
<dbReference type="GO" id="GO:0004386">
    <property type="term" value="F:helicase activity"/>
    <property type="evidence" value="ECO:0007669"/>
    <property type="project" value="UniProtKB-KW"/>
</dbReference>
<dbReference type="GO" id="GO:0050341">
    <property type="term" value="F:thymine dioxygenase activity"/>
    <property type="evidence" value="ECO:0000266"/>
    <property type="project" value="GeneDB"/>
</dbReference>
<dbReference type="GO" id="GO:0070580">
    <property type="term" value="P:base J metabolic process"/>
    <property type="evidence" value="ECO:0000266"/>
    <property type="project" value="GeneDB"/>
</dbReference>
<dbReference type="GO" id="GO:0000724">
    <property type="term" value="P:double-strand break repair via homologous recombination"/>
    <property type="evidence" value="ECO:0000318"/>
    <property type="project" value="GO_Central"/>
</dbReference>
<dbReference type="GO" id="GO:0007131">
    <property type="term" value="P:reciprocal meiotic recombination"/>
    <property type="evidence" value="ECO:0000318"/>
    <property type="project" value="GO_Central"/>
</dbReference>
<dbReference type="CDD" id="cd17919">
    <property type="entry name" value="DEXHc_Snf"/>
    <property type="match status" value="1"/>
</dbReference>
<dbReference type="CDD" id="cd20332">
    <property type="entry name" value="JBP"/>
    <property type="match status" value="1"/>
</dbReference>
<dbReference type="CDD" id="cd18793">
    <property type="entry name" value="SF2_C_SNF"/>
    <property type="match status" value="1"/>
</dbReference>
<dbReference type="FunFam" id="3.40.50.10810:FF:000072">
    <property type="entry name" value="Bifunctional helicase and thymine dioxygenase JBP2"/>
    <property type="match status" value="1"/>
</dbReference>
<dbReference type="FunFam" id="3.40.50.300:FF:003412">
    <property type="entry name" value="Bifunctional helicase and thymine dioxygenase JBP2"/>
    <property type="match status" value="1"/>
</dbReference>
<dbReference type="FunFam" id="3.60.130.30:FF:000001">
    <property type="entry name" value="Bifunctional helicase and thymine dioxygenase JBP2"/>
    <property type="match status" value="1"/>
</dbReference>
<dbReference type="Gene3D" id="3.60.130.30">
    <property type="match status" value="1"/>
</dbReference>
<dbReference type="Gene3D" id="3.40.50.300">
    <property type="entry name" value="P-loop containing nucleotide triphosphate hydrolases"/>
    <property type="match status" value="1"/>
</dbReference>
<dbReference type="Gene3D" id="3.40.50.10810">
    <property type="entry name" value="Tandem AAA-ATPase domain"/>
    <property type="match status" value="1"/>
</dbReference>
<dbReference type="InterPro" id="IPR024779">
    <property type="entry name" value="2OGFeDO_JBP1/TET_oxygenase_dom"/>
</dbReference>
<dbReference type="InterPro" id="IPR014001">
    <property type="entry name" value="Helicase_ATP-bd"/>
</dbReference>
<dbReference type="InterPro" id="IPR001650">
    <property type="entry name" value="Helicase_C-like"/>
</dbReference>
<dbReference type="InterPro" id="IPR027417">
    <property type="entry name" value="P-loop_NTPase"/>
</dbReference>
<dbReference type="InterPro" id="IPR038718">
    <property type="entry name" value="SNF2-like_sf"/>
</dbReference>
<dbReference type="InterPro" id="IPR049730">
    <property type="entry name" value="SNF2/RAD54-like_C"/>
</dbReference>
<dbReference type="InterPro" id="IPR000330">
    <property type="entry name" value="SNF2_N"/>
</dbReference>
<dbReference type="InterPro" id="IPR050496">
    <property type="entry name" value="SNF2_RAD54_helicase_repair"/>
</dbReference>
<dbReference type="PANTHER" id="PTHR45629:SF7">
    <property type="entry name" value="DNA EXCISION REPAIR PROTEIN ERCC-6-RELATED"/>
    <property type="match status" value="1"/>
</dbReference>
<dbReference type="PANTHER" id="PTHR45629">
    <property type="entry name" value="SNF2/RAD54 FAMILY MEMBER"/>
    <property type="match status" value="1"/>
</dbReference>
<dbReference type="Pfam" id="PF00271">
    <property type="entry name" value="Helicase_C"/>
    <property type="match status" value="1"/>
</dbReference>
<dbReference type="Pfam" id="PF00176">
    <property type="entry name" value="SNF2-rel_dom"/>
    <property type="match status" value="1"/>
</dbReference>
<dbReference type="Pfam" id="PF12851">
    <property type="entry name" value="Tet_JBP"/>
    <property type="match status" value="1"/>
</dbReference>
<dbReference type="SMART" id="SM00487">
    <property type="entry name" value="DEXDc"/>
    <property type="match status" value="1"/>
</dbReference>
<dbReference type="SMART" id="SM00490">
    <property type="entry name" value="HELICc"/>
    <property type="match status" value="1"/>
</dbReference>
<dbReference type="SUPFAM" id="SSF52540">
    <property type="entry name" value="P-loop containing nucleoside triphosphate hydrolases"/>
    <property type="match status" value="2"/>
</dbReference>
<dbReference type="PROSITE" id="PS51192">
    <property type="entry name" value="HELICASE_ATP_BIND_1"/>
    <property type="match status" value="1"/>
</dbReference>
<dbReference type="PROSITE" id="PS51194">
    <property type="entry name" value="HELICASE_CTER"/>
    <property type="match status" value="1"/>
</dbReference>
<keyword id="KW-0067">ATP-binding</keyword>
<keyword id="KW-0223">Dioxygenase</keyword>
<keyword id="KW-0238">DNA-binding</keyword>
<keyword id="KW-0347">Helicase</keyword>
<keyword id="KW-0378">Hydrolase</keyword>
<keyword id="KW-0408">Iron</keyword>
<keyword id="KW-0479">Metal-binding</keyword>
<keyword id="KW-0547">Nucleotide-binding</keyword>
<keyword id="KW-0539">Nucleus</keyword>
<keyword id="KW-0560">Oxidoreductase</keyword>
<keyword id="KW-1185">Reference proteome</keyword>
<feature type="chain" id="PRO_0000377560" description="Bifunctional helicase and thymine dioxygenase JBP2">
    <location>
        <begin position="1"/>
        <end position="1098"/>
    </location>
</feature>
<feature type="domain" description="Helicase ATP-binding" evidence="3">
    <location>
        <begin position="555"/>
        <end position="730"/>
    </location>
</feature>
<feature type="domain" description="Helicase C-terminal" evidence="4">
    <location>
        <begin position="897"/>
        <end position="1057"/>
    </location>
</feature>
<feature type="region of interest" description="Thymine dioxygenase">
    <location>
        <begin position="1"/>
        <end position="540"/>
    </location>
</feature>
<feature type="region of interest" description="DNA Helicase">
    <location>
        <begin position="541"/>
        <end position="1098"/>
    </location>
</feature>
<feature type="short sequence motif" description="DEAH box">
    <location>
        <begin position="681"/>
        <end position="684"/>
    </location>
</feature>
<feature type="binding site" evidence="2">
    <location>
        <position position="415"/>
    </location>
    <ligand>
        <name>Fe cation</name>
        <dbReference type="ChEBI" id="CHEBI:24875"/>
        <note>catalytic; for thymine dioxygenase activity</note>
    </ligand>
</feature>
<feature type="binding site" evidence="2">
    <location>
        <position position="417"/>
    </location>
    <ligand>
        <name>Fe cation</name>
        <dbReference type="ChEBI" id="CHEBI:24875"/>
        <note>catalytic; for thymine dioxygenase activity</note>
    </ligand>
</feature>
<feature type="binding site" evidence="2">
    <location>
        <position position="465"/>
    </location>
    <ligand>
        <name>Fe cation</name>
        <dbReference type="ChEBI" id="CHEBI:24875"/>
        <note>catalytic; for thymine dioxygenase activity</note>
    </ligand>
</feature>
<feature type="binding site" evidence="2">
    <location>
        <position position="479"/>
    </location>
    <ligand>
        <name>2-oxoglutarate</name>
        <dbReference type="ChEBI" id="CHEBI:16810"/>
    </ligand>
</feature>
<feature type="binding site" evidence="3">
    <location>
        <begin position="568"/>
        <end position="575"/>
    </location>
    <ligand>
        <name>ATP</name>
        <dbReference type="ChEBI" id="CHEBI:30616"/>
    </ligand>
</feature>
<name>JBP2_LEIMA</name>
<sequence length="1098" mass="124001">MLNGLTRVSTSSELESILDIVQSSGEIAVVFTSPSIGDLETIASETQRRQLRIAGIPRGGYTILPAIPLYDDELLQMCERYTAANEYEKAEMRNSLYMREYPLFAYSMRHQRALFHPADYVSRILQFCSYYVQAPDADVLSLQDRSPFLHISPIKEICTQLRLIARGTPVAASDSESPVPEQLRLHAESDVEKLAAERATAMSIAASSGGASETEQLSLFSGVAPSALFQKDAVEEVNKDAEDTMEDLTGEETVDAVHSFQAEYLTLDGFELVTKASIFYDREGEGQCIVAVYIPGGVPEDTCRAAAAVLEPAATKKNLRAPTNGGLPPDTGIVGYYDYLTNPTQHKCRETEFSRRNWGLLAQSEPLLKHLDKLYSQLAPMHHHLQRVAIPSQYQLCGTVFSTITVNRNFRTAVHTDRGDFRSGLGVLSVINGEFEGCHLAIKRLKKAFQLKVGDVLLFDTSLEHGNTEVVNPEIHWQRTSVVCYLRTGLMSSVCEMERRKHLNRLILEQLLNTEVRNTTVNINGADSSLPPLFVPTRLASHLAPVQLAALGFIVERTEKQSGCVVAMTMGLGKTLVALTLCFSQLYLAPQADILILTPKPIISHWVDEKNKWGMHGLHFPHFVASDGLNSLEFEQQLLEYERQKNNEKPKSGHIFVINGEYLAGFLRRFKRFTPLVMIVDEGHRVAAKGNKLTESLDRLRCNLRIVLSGTPLQNDASELYRLVGWVNKGVSRVLPPKRFQELANDINQFVEGDDGAFYNAVVAQEYIQDWMRGFVFREMENDLPPLHDYLLICGSSDVQREYEEKLGLTETAMTALKATEHRPHHLSTHPACYLAFISDSYQSMVSGWTVRALSNTSRQRVSQLEEIDTMRLEQYVQLVENEQLDAFIDLSGKMRVLVDIVLRVQARKEKLIVFSLYVGSQDLIHRTLTALRVCTFTVRGRDSQDRRRRAMQEFSENKDLIVLVLSTKIAAYGLDFTAANHVVLFDSWWNPQVDAQAIARAYRRNQRKPVTVYRLISATENKFVLRSQTRKIALFKCILHERTSRQALPDELEDCAANEKDEERRNFWAKLKMTSLAGDTRALLNVYRYQESVRESE</sequence>
<proteinExistence type="inferred from homology"/>
<accession>Q4QFY1</accession>
<comment type="function">
    <text evidence="1">Dioxygenase that catalyzes the first step of DNA base J (beta-d-glucosyl-HOMedU) biosynthesis by converting thymine to 5-hydroxymethyluracil (HOMedU). DNA base J is a hypermodified thymidine residue found in the genome of kinetoplastid parasites, which is localized primarily to repetitive DNA, namely the telomeres, and is implicated in the regulation of antigenic variation. Probably also acts as a DNA helicase. Recognizes and binds specific regions of the genome, hydrolyzes ATP and allows the DNA base J de novo synthesis. Involved in initial synthesis of DNA base J, JBP1 being able to act via the basal level of DNA base J and propagate further synthesis. In contrast to JBP1, it does not specifically bind DNA base J, however it binds chromatin (By similarity).</text>
</comment>
<comment type="catalytic activity">
    <reaction evidence="1">
        <text>ATP + H2O = ADP + phosphate + H(+)</text>
        <dbReference type="Rhea" id="RHEA:13065"/>
        <dbReference type="ChEBI" id="CHEBI:15377"/>
        <dbReference type="ChEBI" id="CHEBI:15378"/>
        <dbReference type="ChEBI" id="CHEBI:30616"/>
        <dbReference type="ChEBI" id="CHEBI:43474"/>
        <dbReference type="ChEBI" id="CHEBI:456216"/>
        <dbReference type="EC" id="3.6.4.12"/>
    </reaction>
</comment>
<comment type="catalytic activity">
    <reaction evidence="1">
        <text>thymine + 2-oxoglutarate + O2 = 5-hydroxymethyluracil + succinate + CO2</text>
        <dbReference type="Rhea" id="RHEA:10316"/>
        <dbReference type="ChEBI" id="CHEBI:15379"/>
        <dbReference type="ChEBI" id="CHEBI:16526"/>
        <dbReference type="ChEBI" id="CHEBI:16810"/>
        <dbReference type="ChEBI" id="CHEBI:16964"/>
        <dbReference type="ChEBI" id="CHEBI:17821"/>
        <dbReference type="ChEBI" id="CHEBI:30031"/>
        <dbReference type="EC" id="1.14.11.6"/>
    </reaction>
</comment>
<comment type="cofactor">
    <cofactor evidence="2">
        <name>Fe(2+)</name>
        <dbReference type="ChEBI" id="CHEBI:29033"/>
    </cofactor>
    <text evidence="2">Binds 1 Fe(2+) ion per subunit.</text>
</comment>
<comment type="subcellular location">
    <subcellularLocation>
        <location evidence="1">Nucleus</location>
    </subcellularLocation>
</comment>
<comment type="similarity">
    <text evidence="5">In the C-terminal section; belongs to the SNF2/RAD54 helicase family.</text>
</comment>
<comment type="similarity">
    <text evidence="5">In the N-terminal section; belongs to the TET family. JBP2 subfamily.</text>
</comment>
<organism>
    <name type="scientific">Leishmania major</name>
    <dbReference type="NCBI Taxonomy" id="5664"/>
    <lineage>
        <taxon>Eukaryota</taxon>
        <taxon>Discoba</taxon>
        <taxon>Euglenozoa</taxon>
        <taxon>Kinetoplastea</taxon>
        <taxon>Metakinetoplastina</taxon>
        <taxon>Trypanosomatida</taxon>
        <taxon>Trypanosomatidae</taxon>
        <taxon>Leishmaniinae</taxon>
        <taxon>Leishmania</taxon>
    </lineage>
</organism>
<reference key="1">
    <citation type="journal article" date="2005" name="Science">
        <title>The genome of the kinetoplastid parasite, Leishmania major.</title>
        <authorList>
            <person name="Ivens A.C."/>
            <person name="Peacock C.S."/>
            <person name="Worthey E.A."/>
            <person name="Murphy L."/>
            <person name="Aggarwal G."/>
            <person name="Berriman M."/>
            <person name="Sisk E."/>
            <person name="Rajandream M.A."/>
            <person name="Adlem E."/>
            <person name="Aert R."/>
            <person name="Anupama A."/>
            <person name="Apostolou Z."/>
            <person name="Attipoe P."/>
            <person name="Bason N."/>
            <person name="Bauser C."/>
            <person name="Beck A."/>
            <person name="Beverley S.M."/>
            <person name="Bianchettin G."/>
            <person name="Borzym K."/>
            <person name="Bothe G."/>
            <person name="Bruschi C.V."/>
            <person name="Collins M."/>
            <person name="Cadag E."/>
            <person name="Ciarloni L."/>
            <person name="Clayton C."/>
            <person name="Coulson R.M.R."/>
            <person name="Cronin A."/>
            <person name="Cruz A.K."/>
            <person name="Davies R.M."/>
            <person name="De Gaudenzi J."/>
            <person name="Dobson D.E."/>
            <person name="Duesterhoeft A."/>
            <person name="Fazelina G."/>
            <person name="Fosker N."/>
            <person name="Frasch A.C."/>
            <person name="Fraser A."/>
            <person name="Fuchs M."/>
            <person name="Gabel C."/>
            <person name="Goble A."/>
            <person name="Goffeau A."/>
            <person name="Harris D."/>
            <person name="Hertz-Fowler C."/>
            <person name="Hilbert H."/>
            <person name="Horn D."/>
            <person name="Huang Y."/>
            <person name="Klages S."/>
            <person name="Knights A."/>
            <person name="Kube M."/>
            <person name="Larke N."/>
            <person name="Litvin L."/>
            <person name="Lord A."/>
            <person name="Louie T."/>
            <person name="Marra M."/>
            <person name="Masuy D."/>
            <person name="Matthews K."/>
            <person name="Michaeli S."/>
            <person name="Mottram J.C."/>
            <person name="Mueller-Auer S."/>
            <person name="Munden H."/>
            <person name="Nelson S."/>
            <person name="Norbertczak H."/>
            <person name="Oliver K."/>
            <person name="O'neil S."/>
            <person name="Pentony M."/>
            <person name="Pohl T.M."/>
            <person name="Price C."/>
            <person name="Purnelle B."/>
            <person name="Quail M.A."/>
            <person name="Rabbinowitsch E."/>
            <person name="Reinhardt R."/>
            <person name="Rieger M."/>
            <person name="Rinta J."/>
            <person name="Robben J."/>
            <person name="Robertson L."/>
            <person name="Ruiz J.C."/>
            <person name="Rutter S."/>
            <person name="Saunders D."/>
            <person name="Schaefer M."/>
            <person name="Schein J."/>
            <person name="Schwartz D.C."/>
            <person name="Seeger K."/>
            <person name="Seyler A."/>
            <person name="Sharp S."/>
            <person name="Shin H."/>
            <person name="Sivam D."/>
            <person name="Squares R."/>
            <person name="Squares S."/>
            <person name="Tosato V."/>
            <person name="Vogt C."/>
            <person name="Volckaert G."/>
            <person name="Wambutt R."/>
            <person name="Warren T."/>
            <person name="Wedler H."/>
            <person name="Woodward J."/>
            <person name="Zhou S."/>
            <person name="Zimmermann W."/>
            <person name="Smith D.F."/>
            <person name="Blackwell J.M."/>
            <person name="Stuart K.D."/>
            <person name="Barrell B.G."/>
            <person name="Myler P.J."/>
        </authorList>
    </citation>
    <scope>NUCLEOTIDE SEQUENCE [LARGE SCALE GENOMIC DNA]</scope>
    <source>
        <strain>MHOM/IL/81/Friedlin</strain>
    </source>
</reference>
<gene>
    <name type="primary">JBP2</name>
    <name type="ORF">LmjF14.0040</name>
    <name type="ORF">LmjF_14_0040</name>
</gene>
<evidence type="ECO:0000250" key="1">
    <source>
        <dbReference type="UniProtKB" id="B6EU02"/>
    </source>
</evidence>
<evidence type="ECO:0000250" key="2">
    <source>
        <dbReference type="UniProtKB" id="Q6N021"/>
    </source>
</evidence>
<evidence type="ECO:0000255" key="3">
    <source>
        <dbReference type="PROSITE-ProRule" id="PRU00541"/>
    </source>
</evidence>
<evidence type="ECO:0000255" key="4">
    <source>
        <dbReference type="PROSITE-ProRule" id="PRU00542"/>
    </source>
</evidence>
<evidence type="ECO:0000305" key="5"/>
<protein>
    <recommendedName>
        <fullName>Bifunctional helicase and thymine dioxygenase JBP2</fullName>
    </recommendedName>
    <alternativeName>
        <fullName>J-binding protein 2</fullName>
    </alternativeName>
    <domain>
        <recommendedName>
            <fullName>Probable DNA helicase JBP2</fullName>
            <ecNumber evidence="1">3.6.4.12</ecNumber>
        </recommendedName>
    </domain>
    <domain>
        <recommendedName>
            <fullName>Thymine dioxygenase JBP2</fullName>
            <ecNumber evidence="1">1.14.11.6</ecNumber>
        </recommendedName>
    </domain>
</protein>